<name>AROC_BARQU</name>
<accession>Q6G0D7</accession>
<protein>
    <recommendedName>
        <fullName evidence="1">Chorismate synthase</fullName>
        <shortName evidence="1">CS</shortName>
        <ecNumber evidence="1">4.2.3.5</ecNumber>
    </recommendedName>
    <alternativeName>
        <fullName evidence="1">5-enolpyruvylshikimate-3-phosphate phospholyase</fullName>
    </alternativeName>
</protein>
<comment type="function">
    <text evidence="1">Catalyzes the anti-1,4-elimination of the C-3 phosphate and the C-6 proR hydrogen from 5-enolpyruvylshikimate-3-phosphate (EPSP) to yield chorismate, which is the branch point compound that serves as the starting substrate for the three terminal pathways of aromatic amino acid biosynthesis. This reaction introduces a second double bond into the aromatic ring system.</text>
</comment>
<comment type="catalytic activity">
    <reaction evidence="1">
        <text>5-O-(1-carboxyvinyl)-3-phosphoshikimate = chorismate + phosphate</text>
        <dbReference type="Rhea" id="RHEA:21020"/>
        <dbReference type="ChEBI" id="CHEBI:29748"/>
        <dbReference type="ChEBI" id="CHEBI:43474"/>
        <dbReference type="ChEBI" id="CHEBI:57701"/>
        <dbReference type="EC" id="4.2.3.5"/>
    </reaction>
</comment>
<comment type="cofactor">
    <cofactor evidence="1">
        <name>FMNH2</name>
        <dbReference type="ChEBI" id="CHEBI:57618"/>
    </cofactor>
    <text evidence="1">Reduced FMN (FMNH(2)).</text>
</comment>
<comment type="pathway">
    <text evidence="1">Metabolic intermediate biosynthesis; chorismate biosynthesis; chorismate from D-erythrose 4-phosphate and phosphoenolpyruvate: step 7/7.</text>
</comment>
<comment type="subunit">
    <text evidence="1">Homotetramer.</text>
</comment>
<comment type="similarity">
    <text evidence="1">Belongs to the chorismate synthase family.</text>
</comment>
<gene>
    <name evidence="1" type="primary">aroC</name>
    <name type="ordered locus">BQ03510</name>
</gene>
<dbReference type="EC" id="4.2.3.5" evidence="1"/>
<dbReference type="EMBL" id="BX897700">
    <property type="protein sequence ID" value="CAF25851.1"/>
    <property type="molecule type" value="Genomic_DNA"/>
</dbReference>
<dbReference type="RefSeq" id="WP_011179145.1">
    <property type="nucleotide sequence ID" value="NC_005955.1"/>
</dbReference>
<dbReference type="SMR" id="Q6G0D7"/>
<dbReference type="KEGG" id="bqu:BQ03510"/>
<dbReference type="eggNOG" id="COG0082">
    <property type="taxonomic scope" value="Bacteria"/>
</dbReference>
<dbReference type="HOGENOM" id="CLU_034547_0_0_5"/>
<dbReference type="OrthoDB" id="9771806at2"/>
<dbReference type="UniPathway" id="UPA00053">
    <property type="reaction ID" value="UER00090"/>
</dbReference>
<dbReference type="Proteomes" id="UP000000597">
    <property type="component" value="Chromosome"/>
</dbReference>
<dbReference type="GO" id="GO:0005829">
    <property type="term" value="C:cytosol"/>
    <property type="evidence" value="ECO:0007669"/>
    <property type="project" value="TreeGrafter"/>
</dbReference>
<dbReference type="GO" id="GO:0004107">
    <property type="term" value="F:chorismate synthase activity"/>
    <property type="evidence" value="ECO:0007669"/>
    <property type="project" value="UniProtKB-UniRule"/>
</dbReference>
<dbReference type="GO" id="GO:0010181">
    <property type="term" value="F:FMN binding"/>
    <property type="evidence" value="ECO:0007669"/>
    <property type="project" value="TreeGrafter"/>
</dbReference>
<dbReference type="GO" id="GO:0008652">
    <property type="term" value="P:amino acid biosynthetic process"/>
    <property type="evidence" value="ECO:0007669"/>
    <property type="project" value="UniProtKB-KW"/>
</dbReference>
<dbReference type="GO" id="GO:0009073">
    <property type="term" value="P:aromatic amino acid family biosynthetic process"/>
    <property type="evidence" value="ECO:0007669"/>
    <property type="project" value="UniProtKB-KW"/>
</dbReference>
<dbReference type="GO" id="GO:0009423">
    <property type="term" value="P:chorismate biosynthetic process"/>
    <property type="evidence" value="ECO:0007669"/>
    <property type="project" value="UniProtKB-UniRule"/>
</dbReference>
<dbReference type="CDD" id="cd07304">
    <property type="entry name" value="Chorismate_synthase"/>
    <property type="match status" value="1"/>
</dbReference>
<dbReference type="Gene3D" id="3.60.150.10">
    <property type="entry name" value="Chorismate synthase AroC"/>
    <property type="match status" value="1"/>
</dbReference>
<dbReference type="HAMAP" id="MF_00300">
    <property type="entry name" value="Chorismate_synth"/>
    <property type="match status" value="1"/>
</dbReference>
<dbReference type="InterPro" id="IPR000453">
    <property type="entry name" value="Chorismate_synth"/>
</dbReference>
<dbReference type="InterPro" id="IPR035904">
    <property type="entry name" value="Chorismate_synth_AroC_sf"/>
</dbReference>
<dbReference type="InterPro" id="IPR020541">
    <property type="entry name" value="Chorismate_synthase_CS"/>
</dbReference>
<dbReference type="NCBIfam" id="TIGR00033">
    <property type="entry name" value="aroC"/>
    <property type="match status" value="1"/>
</dbReference>
<dbReference type="NCBIfam" id="NF003793">
    <property type="entry name" value="PRK05382.1"/>
    <property type="match status" value="1"/>
</dbReference>
<dbReference type="PANTHER" id="PTHR21085">
    <property type="entry name" value="CHORISMATE SYNTHASE"/>
    <property type="match status" value="1"/>
</dbReference>
<dbReference type="PANTHER" id="PTHR21085:SF0">
    <property type="entry name" value="CHORISMATE SYNTHASE"/>
    <property type="match status" value="1"/>
</dbReference>
<dbReference type="Pfam" id="PF01264">
    <property type="entry name" value="Chorismate_synt"/>
    <property type="match status" value="1"/>
</dbReference>
<dbReference type="PIRSF" id="PIRSF001456">
    <property type="entry name" value="Chorismate_synth"/>
    <property type="match status" value="1"/>
</dbReference>
<dbReference type="SUPFAM" id="SSF103263">
    <property type="entry name" value="Chorismate synthase, AroC"/>
    <property type="match status" value="1"/>
</dbReference>
<dbReference type="PROSITE" id="PS00787">
    <property type="entry name" value="CHORISMATE_SYNTHASE_1"/>
    <property type="match status" value="1"/>
</dbReference>
<dbReference type="PROSITE" id="PS00788">
    <property type="entry name" value="CHORISMATE_SYNTHASE_2"/>
    <property type="match status" value="1"/>
</dbReference>
<dbReference type="PROSITE" id="PS00789">
    <property type="entry name" value="CHORISMATE_SYNTHASE_3"/>
    <property type="match status" value="1"/>
</dbReference>
<evidence type="ECO:0000255" key="1">
    <source>
        <dbReference type="HAMAP-Rule" id="MF_00300"/>
    </source>
</evidence>
<reference key="1">
    <citation type="journal article" date="2004" name="Proc. Natl. Acad. Sci. U.S.A.">
        <title>The louse-borne human pathogen Bartonella quintana is a genomic derivative of the zoonotic agent Bartonella henselae.</title>
        <authorList>
            <person name="Alsmark U.C.M."/>
            <person name="Frank A.C."/>
            <person name="Karlberg E.O."/>
            <person name="Legault B.-A."/>
            <person name="Ardell D.H."/>
            <person name="Canbaeck B."/>
            <person name="Eriksson A.-S."/>
            <person name="Naeslund A.K."/>
            <person name="Handley S.A."/>
            <person name="Huvet M."/>
            <person name="La Scola B."/>
            <person name="Holmberg M."/>
            <person name="Andersson S.G.E."/>
        </authorList>
    </citation>
    <scope>NUCLEOTIDE SEQUENCE [LARGE SCALE GENOMIC DNA]</scope>
    <source>
        <strain>Toulouse</strain>
    </source>
</reference>
<sequence>MSHNTFGHLFRVTTWGESHGVALGCVIDGCPPGITFTLAEIQSYLDKRRPGQSRYTTQRRELDQVEILSGVIVQDDGATLVTTGTPISLLIRNTDQRSKDYGSIVHQYRPGHADYTYDVKYGIRDFQGGGRASARETAARVAAGALARKIVPGLIVRGALIAIGPHNINRDRWDWLEVENNPFFTPDAEMVPVFSDYIDTVRKNGSSVGALVEIVAENVPAGLGAPIYAKLDQDIASSLMSINAVKGVEIGDGFAAACLTGEENADEMRMGSDGKPVFLSNHAGGILGGISSGQPIVARFAVKPTPSILTSRRSIDVDGNDVNVITKGRHDPCVGIRAVPVGEAMIACAIADHYLRHRGQVGRFER</sequence>
<keyword id="KW-0028">Amino-acid biosynthesis</keyword>
<keyword id="KW-0057">Aromatic amino acid biosynthesis</keyword>
<keyword id="KW-0274">FAD</keyword>
<keyword id="KW-0285">Flavoprotein</keyword>
<keyword id="KW-0288">FMN</keyword>
<keyword id="KW-0456">Lyase</keyword>
<keyword id="KW-0521">NADP</keyword>
<organism>
    <name type="scientific">Bartonella quintana (strain Toulouse)</name>
    <name type="common">Rochalimaea quintana</name>
    <dbReference type="NCBI Taxonomy" id="283165"/>
    <lineage>
        <taxon>Bacteria</taxon>
        <taxon>Pseudomonadati</taxon>
        <taxon>Pseudomonadota</taxon>
        <taxon>Alphaproteobacteria</taxon>
        <taxon>Hyphomicrobiales</taxon>
        <taxon>Bartonellaceae</taxon>
        <taxon>Bartonella</taxon>
    </lineage>
</organism>
<feature type="chain" id="PRO_1000022462" description="Chorismate synthase">
    <location>
        <begin position="1"/>
        <end position="366"/>
    </location>
</feature>
<feature type="binding site" evidence="1">
    <location>
        <position position="48"/>
    </location>
    <ligand>
        <name>NADP(+)</name>
        <dbReference type="ChEBI" id="CHEBI:58349"/>
    </ligand>
</feature>
<feature type="binding site" evidence="1">
    <location>
        <position position="54"/>
    </location>
    <ligand>
        <name>NADP(+)</name>
        <dbReference type="ChEBI" id="CHEBI:58349"/>
    </ligand>
</feature>
<feature type="binding site" evidence="1">
    <location>
        <begin position="131"/>
        <end position="133"/>
    </location>
    <ligand>
        <name>FMN</name>
        <dbReference type="ChEBI" id="CHEBI:58210"/>
    </ligand>
</feature>
<feature type="binding site" evidence="1">
    <location>
        <begin position="243"/>
        <end position="244"/>
    </location>
    <ligand>
        <name>FMN</name>
        <dbReference type="ChEBI" id="CHEBI:58210"/>
    </ligand>
</feature>
<feature type="binding site" evidence="1">
    <location>
        <position position="288"/>
    </location>
    <ligand>
        <name>FMN</name>
        <dbReference type="ChEBI" id="CHEBI:58210"/>
    </ligand>
</feature>
<feature type="binding site" evidence="1">
    <location>
        <begin position="303"/>
        <end position="307"/>
    </location>
    <ligand>
        <name>FMN</name>
        <dbReference type="ChEBI" id="CHEBI:58210"/>
    </ligand>
</feature>
<feature type="binding site" evidence="1">
    <location>
        <position position="329"/>
    </location>
    <ligand>
        <name>FMN</name>
        <dbReference type="ChEBI" id="CHEBI:58210"/>
    </ligand>
</feature>
<proteinExistence type="inferred from homology"/>